<organism>
    <name type="scientific">Enterobacter cloacae subsp. cloacae (strain ATCC 13047 / DSM 30054 / NBRC 13535 / NCTC 10005 / WDCM 00083 / NCDC 279-56)</name>
    <dbReference type="NCBI Taxonomy" id="716541"/>
    <lineage>
        <taxon>Bacteria</taxon>
        <taxon>Pseudomonadati</taxon>
        <taxon>Pseudomonadota</taxon>
        <taxon>Gammaproteobacteria</taxon>
        <taxon>Enterobacterales</taxon>
        <taxon>Enterobacteriaceae</taxon>
        <taxon>Enterobacter</taxon>
        <taxon>Enterobacter cloacae complex</taxon>
    </lineage>
</organism>
<sequence>MGEISITKLLVVAALVVLLFGTKKLRTLGGDLGAAIKGFKKAMNDDDAAAKKSAEDTVPAEKLSHKE</sequence>
<comment type="function">
    <text evidence="1">Part of the twin-arginine translocation (Tat) system that transports large folded proteins containing a characteristic twin-arginine motif in their signal peptide across membranes. TatE shares overlapping functions with TatA.</text>
</comment>
<comment type="subcellular location">
    <subcellularLocation>
        <location evidence="1">Cell inner membrane</location>
        <topology evidence="1">Single-pass membrane protein</topology>
    </subcellularLocation>
</comment>
<comment type="similarity">
    <text evidence="1">Belongs to the TatA/E family. TatE subfamily.</text>
</comment>
<dbReference type="EMBL" id="CP001918">
    <property type="protein sequence ID" value="ADF62604.1"/>
    <property type="molecule type" value="Genomic_DNA"/>
</dbReference>
<dbReference type="RefSeq" id="WP_013097596.1">
    <property type="nucleotide sequence ID" value="NC_014121.1"/>
</dbReference>
<dbReference type="RefSeq" id="YP_003613553.1">
    <property type="nucleotide sequence ID" value="NC_014121.1"/>
</dbReference>
<dbReference type="SMR" id="D5CHK9"/>
<dbReference type="STRING" id="716541.ECL_03068"/>
<dbReference type="EnsemblBacteria" id="ADF62604">
    <property type="protein sequence ID" value="ADF62604"/>
    <property type="gene ID" value="ECL_03068"/>
</dbReference>
<dbReference type="KEGG" id="enc:ECL_03068"/>
<dbReference type="PATRIC" id="fig|716541.4.peg.3238"/>
<dbReference type="eggNOG" id="COG1826">
    <property type="taxonomic scope" value="Bacteria"/>
</dbReference>
<dbReference type="HOGENOM" id="CLU_086034_5_3_6"/>
<dbReference type="Proteomes" id="UP000002363">
    <property type="component" value="Chromosome"/>
</dbReference>
<dbReference type="GO" id="GO:0033281">
    <property type="term" value="C:TAT protein transport complex"/>
    <property type="evidence" value="ECO:0007669"/>
    <property type="project" value="UniProtKB-UniRule"/>
</dbReference>
<dbReference type="GO" id="GO:0008320">
    <property type="term" value="F:protein transmembrane transporter activity"/>
    <property type="evidence" value="ECO:0007669"/>
    <property type="project" value="UniProtKB-UniRule"/>
</dbReference>
<dbReference type="GO" id="GO:0043953">
    <property type="term" value="P:protein transport by the Tat complex"/>
    <property type="evidence" value="ECO:0007669"/>
    <property type="project" value="UniProtKB-UniRule"/>
</dbReference>
<dbReference type="FunFam" id="1.20.5.3310:FF:000001">
    <property type="entry name" value="Probable Sec-independent protein translocase protein TatE"/>
    <property type="match status" value="1"/>
</dbReference>
<dbReference type="Gene3D" id="1.20.5.3310">
    <property type="match status" value="1"/>
</dbReference>
<dbReference type="HAMAP" id="MF_00236">
    <property type="entry name" value="TatA_E"/>
    <property type="match status" value="1"/>
</dbReference>
<dbReference type="HAMAP" id="MF_00903">
    <property type="entry name" value="TatE"/>
    <property type="match status" value="1"/>
</dbReference>
<dbReference type="InterPro" id="IPR003369">
    <property type="entry name" value="TatA/B/E"/>
</dbReference>
<dbReference type="InterPro" id="IPR006312">
    <property type="entry name" value="TatA/E"/>
</dbReference>
<dbReference type="InterPro" id="IPR024905">
    <property type="entry name" value="TatE"/>
</dbReference>
<dbReference type="NCBIfam" id="NF002448">
    <property type="entry name" value="PRK01614.1"/>
    <property type="match status" value="1"/>
</dbReference>
<dbReference type="NCBIfam" id="NF002960">
    <property type="entry name" value="PRK03625.1"/>
    <property type="match status" value="1"/>
</dbReference>
<dbReference type="NCBIfam" id="TIGR01411">
    <property type="entry name" value="tatAE"/>
    <property type="match status" value="1"/>
</dbReference>
<dbReference type="PANTHER" id="PTHR42982">
    <property type="entry name" value="SEC-INDEPENDENT PROTEIN TRANSLOCASE PROTEIN TATA"/>
    <property type="match status" value="1"/>
</dbReference>
<dbReference type="PANTHER" id="PTHR42982:SF5">
    <property type="entry name" value="SEC-INDEPENDENT PROTEIN TRANSLOCASE PROTEIN TATE"/>
    <property type="match status" value="1"/>
</dbReference>
<dbReference type="Pfam" id="PF02416">
    <property type="entry name" value="TatA_B_E"/>
    <property type="match status" value="1"/>
</dbReference>
<gene>
    <name evidence="1" type="primary">tatE</name>
    <name type="ordered locus">ECL_03068</name>
</gene>
<keyword id="KW-0997">Cell inner membrane</keyword>
<keyword id="KW-1003">Cell membrane</keyword>
<keyword id="KW-0472">Membrane</keyword>
<keyword id="KW-0653">Protein transport</keyword>
<keyword id="KW-1185">Reference proteome</keyword>
<keyword id="KW-0811">Translocation</keyword>
<keyword id="KW-0812">Transmembrane</keyword>
<keyword id="KW-1133">Transmembrane helix</keyword>
<keyword id="KW-0813">Transport</keyword>
<evidence type="ECO:0000255" key="1">
    <source>
        <dbReference type="HAMAP-Rule" id="MF_00903"/>
    </source>
</evidence>
<reference key="1">
    <citation type="journal article" date="2010" name="J. Bacteriol.">
        <title>Complete genome sequence of Enterobacter cloacae subsp. cloacae type strain ATCC 13047.</title>
        <authorList>
            <person name="Ren Y."/>
            <person name="Ren Y."/>
            <person name="Zhou Z."/>
            <person name="Guo X."/>
            <person name="Li Y."/>
            <person name="Feng L."/>
            <person name="Wang L."/>
        </authorList>
    </citation>
    <scope>NUCLEOTIDE SEQUENCE [LARGE SCALE GENOMIC DNA]</scope>
    <source>
        <strain>ATCC 13047 / DSM 30054 / NBRC 13535 / NCTC 10005 / WDCM 00083 / NCDC 279-56</strain>
    </source>
</reference>
<name>TATE_ENTCC</name>
<protein>
    <recommendedName>
        <fullName evidence="1">Probable Sec-independent protein translocase protein TatE</fullName>
    </recommendedName>
</protein>
<proteinExistence type="inferred from homology"/>
<accession>D5CHK9</accession>
<feature type="chain" id="PRO_0000412965" description="Probable Sec-independent protein translocase protein TatE">
    <location>
        <begin position="1"/>
        <end position="67"/>
    </location>
</feature>
<feature type="transmembrane region" description="Helical" evidence="1">
    <location>
        <begin position="4"/>
        <end position="21"/>
    </location>
</feature>